<dbReference type="EMBL" id="CP001280">
    <property type="protein sequence ID" value="ACK49547.1"/>
    <property type="molecule type" value="Genomic_DNA"/>
</dbReference>
<dbReference type="RefSeq" id="WP_012589617.1">
    <property type="nucleotide sequence ID" value="NC_011666.1"/>
</dbReference>
<dbReference type="SMR" id="B8ELF8"/>
<dbReference type="STRING" id="395965.Msil_0575"/>
<dbReference type="KEGG" id="msl:Msil_0575"/>
<dbReference type="eggNOG" id="COG0091">
    <property type="taxonomic scope" value="Bacteria"/>
</dbReference>
<dbReference type="HOGENOM" id="CLU_083987_3_0_5"/>
<dbReference type="OrthoDB" id="9805969at2"/>
<dbReference type="Proteomes" id="UP000002257">
    <property type="component" value="Chromosome"/>
</dbReference>
<dbReference type="GO" id="GO:0022625">
    <property type="term" value="C:cytosolic large ribosomal subunit"/>
    <property type="evidence" value="ECO:0007669"/>
    <property type="project" value="TreeGrafter"/>
</dbReference>
<dbReference type="GO" id="GO:0019843">
    <property type="term" value="F:rRNA binding"/>
    <property type="evidence" value="ECO:0007669"/>
    <property type="project" value="UniProtKB-UniRule"/>
</dbReference>
<dbReference type="GO" id="GO:0003735">
    <property type="term" value="F:structural constituent of ribosome"/>
    <property type="evidence" value="ECO:0007669"/>
    <property type="project" value="InterPro"/>
</dbReference>
<dbReference type="GO" id="GO:0006412">
    <property type="term" value="P:translation"/>
    <property type="evidence" value="ECO:0007669"/>
    <property type="project" value="UniProtKB-UniRule"/>
</dbReference>
<dbReference type="CDD" id="cd00336">
    <property type="entry name" value="Ribosomal_L22"/>
    <property type="match status" value="1"/>
</dbReference>
<dbReference type="Gene3D" id="3.90.470.10">
    <property type="entry name" value="Ribosomal protein L22/L17"/>
    <property type="match status" value="1"/>
</dbReference>
<dbReference type="HAMAP" id="MF_01331_B">
    <property type="entry name" value="Ribosomal_uL22_B"/>
    <property type="match status" value="1"/>
</dbReference>
<dbReference type="InterPro" id="IPR001063">
    <property type="entry name" value="Ribosomal_uL22"/>
</dbReference>
<dbReference type="InterPro" id="IPR005727">
    <property type="entry name" value="Ribosomal_uL22_bac/chlpt-type"/>
</dbReference>
<dbReference type="InterPro" id="IPR047867">
    <property type="entry name" value="Ribosomal_uL22_bac/org-type"/>
</dbReference>
<dbReference type="InterPro" id="IPR018260">
    <property type="entry name" value="Ribosomal_uL22_CS"/>
</dbReference>
<dbReference type="InterPro" id="IPR036394">
    <property type="entry name" value="Ribosomal_uL22_sf"/>
</dbReference>
<dbReference type="NCBIfam" id="TIGR01044">
    <property type="entry name" value="rplV_bact"/>
    <property type="match status" value="1"/>
</dbReference>
<dbReference type="PANTHER" id="PTHR13501">
    <property type="entry name" value="CHLOROPLAST 50S RIBOSOMAL PROTEIN L22-RELATED"/>
    <property type="match status" value="1"/>
</dbReference>
<dbReference type="PANTHER" id="PTHR13501:SF8">
    <property type="entry name" value="LARGE RIBOSOMAL SUBUNIT PROTEIN UL22M"/>
    <property type="match status" value="1"/>
</dbReference>
<dbReference type="Pfam" id="PF00237">
    <property type="entry name" value="Ribosomal_L22"/>
    <property type="match status" value="1"/>
</dbReference>
<dbReference type="SUPFAM" id="SSF54843">
    <property type="entry name" value="Ribosomal protein L22"/>
    <property type="match status" value="1"/>
</dbReference>
<dbReference type="PROSITE" id="PS00464">
    <property type="entry name" value="RIBOSOMAL_L22"/>
    <property type="match status" value="1"/>
</dbReference>
<keyword id="KW-1185">Reference proteome</keyword>
<keyword id="KW-0687">Ribonucleoprotein</keyword>
<keyword id="KW-0689">Ribosomal protein</keyword>
<keyword id="KW-0694">RNA-binding</keyword>
<keyword id="KW-0699">rRNA-binding</keyword>
<reference key="1">
    <citation type="journal article" date="2010" name="J. Bacteriol.">
        <title>Complete genome sequence of the aerobic facultative methanotroph Methylocella silvestris BL2.</title>
        <authorList>
            <person name="Chen Y."/>
            <person name="Crombie A."/>
            <person name="Rahman M.T."/>
            <person name="Dedysh S.N."/>
            <person name="Liesack W."/>
            <person name="Stott M.B."/>
            <person name="Alam M."/>
            <person name="Theisen A.R."/>
            <person name="Murrell J.C."/>
            <person name="Dunfield P.F."/>
        </authorList>
    </citation>
    <scope>NUCLEOTIDE SEQUENCE [LARGE SCALE GENOMIC DNA]</scope>
    <source>
        <strain>DSM 15510 / CIP 108128 / LMG 27833 / NCIMB 13906 / BL2</strain>
    </source>
</reference>
<sequence>MSKEKTPRALKDNEAKAVARMLRISPQKLNLLAQLIRGKKVERALAELEFSRKRAAFDVRKTLESAIANAENNHSLEVDDLVVAEAFVGKALVMKRFSPRARGRSGKIQKPFSHLTIVLREVAVAAQA</sequence>
<comment type="function">
    <text evidence="1">This protein binds specifically to 23S rRNA; its binding is stimulated by other ribosomal proteins, e.g. L4, L17, and L20. It is important during the early stages of 50S assembly. It makes multiple contacts with different domains of the 23S rRNA in the assembled 50S subunit and ribosome (By similarity).</text>
</comment>
<comment type="function">
    <text evidence="1">The globular domain of the protein is located near the polypeptide exit tunnel on the outside of the subunit, while an extended beta-hairpin is found that lines the wall of the exit tunnel in the center of the 70S ribosome.</text>
</comment>
<comment type="subunit">
    <text evidence="1">Part of the 50S ribosomal subunit.</text>
</comment>
<comment type="similarity">
    <text evidence="1">Belongs to the universal ribosomal protein uL22 family.</text>
</comment>
<protein>
    <recommendedName>
        <fullName evidence="1">Large ribosomal subunit protein uL22</fullName>
    </recommendedName>
    <alternativeName>
        <fullName evidence="2">50S ribosomal protein L22</fullName>
    </alternativeName>
</protein>
<organism>
    <name type="scientific">Methylocella silvestris (strain DSM 15510 / CIP 108128 / LMG 27833 / NCIMB 13906 / BL2)</name>
    <dbReference type="NCBI Taxonomy" id="395965"/>
    <lineage>
        <taxon>Bacteria</taxon>
        <taxon>Pseudomonadati</taxon>
        <taxon>Pseudomonadota</taxon>
        <taxon>Alphaproteobacteria</taxon>
        <taxon>Hyphomicrobiales</taxon>
        <taxon>Beijerinckiaceae</taxon>
        <taxon>Methylocella</taxon>
    </lineage>
</organism>
<proteinExistence type="inferred from homology"/>
<name>RL22_METSB</name>
<feature type="chain" id="PRO_1000166073" description="Large ribosomal subunit protein uL22">
    <location>
        <begin position="1"/>
        <end position="128"/>
    </location>
</feature>
<gene>
    <name evidence="1" type="primary">rplV</name>
    <name type="ordered locus">Msil_0575</name>
</gene>
<evidence type="ECO:0000255" key="1">
    <source>
        <dbReference type="HAMAP-Rule" id="MF_01331"/>
    </source>
</evidence>
<evidence type="ECO:0000305" key="2"/>
<accession>B8ELF8</accession>